<dbReference type="EC" id="3.4.11.1" evidence="1"/>
<dbReference type="EC" id="3.4.11.10" evidence="1"/>
<dbReference type="EMBL" id="CP000653">
    <property type="protein sequence ID" value="ABP62305.1"/>
    <property type="molecule type" value="Genomic_DNA"/>
</dbReference>
<dbReference type="RefSeq" id="WP_015960629.1">
    <property type="nucleotide sequence ID" value="NC_009436.1"/>
</dbReference>
<dbReference type="SMR" id="A4WF25"/>
<dbReference type="STRING" id="399742.Ent638_3648"/>
<dbReference type="MEROPS" id="M17.003"/>
<dbReference type="GeneID" id="93306617"/>
<dbReference type="KEGG" id="ent:Ent638_3648"/>
<dbReference type="eggNOG" id="COG0260">
    <property type="taxonomic scope" value="Bacteria"/>
</dbReference>
<dbReference type="HOGENOM" id="CLU_013734_2_2_6"/>
<dbReference type="OrthoDB" id="9809354at2"/>
<dbReference type="Proteomes" id="UP000000230">
    <property type="component" value="Chromosome"/>
</dbReference>
<dbReference type="GO" id="GO:0005737">
    <property type="term" value="C:cytoplasm"/>
    <property type="evidence" value="ECO:0007669"/>
    <property type="project" value="UniProtKB-SubCell"/>
</dbReference>
<dbReference type="GO" id="GO:0030145">
    <property type="term" value="F:manganese ion binding"/>
    <property type="evidence" value="ECO:0007669"/>
    <property type="project" value="UniProtKB-UniRule"/>
</dbReference>
<dbReference type="GO" id="GO:0070006">
    <property type="term" value="F:metalloaminopeptidase activity"/>
    <property type="evidence" value="ECO:0007669"/>
    <property type="project" value="InterPro"/>
</dbReference>
<dbReference type="GO" id="GO:0006508">
    <property type="term" value="P:proteolysis"/>
    <property type="evidence" value="ECO:0007669"/>
    <property type="project" value="UniProtKB-KW"/>
</dbReference>
<dbReference type="CDD" id="cd00433">
    <property type="entry name" value="Peptidase_M17"/>
    <property type="match status" value="1"/>
</dbReference>
<dbReference type="FunFam" id="3.40.220.10:FF:000001">
    <property type="entry name" value="Probable cytosol aminopeptidase"/>
    <property type="match status" value="1"/>
</dbReference>
<dbReference type="FunFam" id="3.40.630.10:FF:000004">
    <property type="entry name" value="Probable cytosol aminopeptidase"/>
    <property type="match status" value="1"/>
</dbReference>
<dbReference type="Gene3D" id="3.40.220.10">
    <property type="entry name" value="Leucine Aminopeptidase, subunit E, domain 1"/>
    <property type="match status" value="1"/>
</dbReference>
<dbReference type="Gene3D" id="3.40.630.10">
    <property type="entry name" value="Zn peptidases"/>
    <property type="match status" value="1"/>
</dbReference>
<dbReference type="HAMAP" id="MF_00181">
    <property type="entry name" value="Cytosol_peptidase_M17"/>
    <property type="match status" value="1"/>
</dbReference>
<dbReference type="InterPro" id="IPR011356">
    <property type="entry name" value="Leucine_aapep/pepB"/>
</dbReference>
<dbReference type="InterPro" id="IPR043472">
    <property type="entry name" value="Macro_dom-like"/>
</dbReference>
<dbReference type="InterPro" id="IPR000819">
    <property type="entry name" value="Peptidase_M17_C"/>
</dbReference>
<dbReference type="InterPro" id="IPR023042">
    <property type="entry name" value="Peptidase_M17_leu_NH2_pept"/>
</dbReference>
<dbReference type="InterPro" id="IPR008283">
    <property type="entry name" value="Peptidase_M17_N"/>
</dbReference>
<dbReference type="NCBIfam" id="NF002072">
    <property type="entry name" value="PRK00913.1-1"/>
    <property type="match status" value="1"/>
</dbReference>
<dbReference type="NCBIfam" id="NF002074">
    <property type="entry name" value="PRK00913.1-4"/>
    <property type="match status" value="1"/>
</dbReference>
<dbReference type="PANTHER" id="PTHR11963:SF23">
    <property type="entry name" value="CYTOSOL AMINOPEPTIDASE"/>
    <property type="match status" value="1"/>
</dbReference>
<dbReference type="PANTHER" id="PTHR11963">
    <property type="entry name" value="LEUCINE AMINOPEPTIDASE-RELATED"/>
    <property type="match status" value="1"/>
</dbReference>
<dbReference type="Pfam" id="PF00883">
    <property type="entry name" value="Peptidase_M17"/>
    <property type="match status" value="1"/>
</dbReference>
<dbReference type="Pfam" id="PF02789">
    <property type="entry name" value="Peptidase_M17_N"/>
    <property type="match status" value="1"/>
</dbReference>
<dbReference type="PRINTS" id="PR00481">
    <property type="entry name" value="LAMNOPPTDASE"/>
</dbReference>
<dbReference type="SUPFAM" id="SSF52949">
    <property type="entry name" value="Macro domain-like"/>
    <property type="match status" value="1"/>
</dbReference>
<dbReference type="SUPFAM" id="SSF53187">
    <property type="entry name" value="Zn-dependent exopeptidases"/>
    <property type="match status" value="1"/>
</dbReference>
<dbReference type="PROSITE" id="PS00631">
    <property type="entry name" value="CYTOSOL_AP"/>
    <property type="match status" value="1"/>
</dbReference>
<gene>
    <name evidence="1" type="primary">pepA</name>
    <name type="ordered locus">Ent638_3648</name>
</gene>
<evidence type="ECO:0000255" key="1">
    <source>
        <dbReference type="HAMAP-Rule" id="MF_00181"/>
    </source>
</evidence>
<reference key="1">
    <citation type="journal article" date="2010" name="PLoS Genet.">
        <title>Genome sequence of the plant growth promoting endophytic bacterium Enterobacter sp. 638.</title>
        <authorList>
            <person name="Taghavi S."/>
            <person name="van der Lelie D."/>
            <person name="Hoffman A."/>
            <person name="Zhang Y.B."/>
            <person name="Walla M.D."/>
            <person name="Vangronsveld J."/>
            <person name="Newman L."/>
            <person name="Monchy S."/>
        </authorList>
    </citation>
    <scope>NUCLEOTIDE SEQUENCE [LARGE SCALE GENOMIC DNA]</scope>
    <source>
        <strain>638</strain>
    </source>
</reference>
<name>AMPA_ENT38</name>
<organism>
    <name type="scientific">Enterobacter sp. (strain 638)</name>
    <dbReference type="NCBI Taxonomy" id="399742"/>
    <lineage>
        <taxon>Bacteria</taxon>
        <taxon>Pseudomonadati</taxon>
        <taxon>Pseudomonadota</taxon>
        <taxon>Gammaproteobacteria</taxon>
        <taxon>Enterobacterales</taxon>
        <taxon>Enterobacteriaceae</taxon>
        <taxon>Enterobacter</taxon>
    </lineage>
</organism>
<accession>A4WF25</accession>
<comment type="function">
    <text evidence="1">Presumably involved in the processing and regular turnover of intracellular proteins. Catalyzes the removal of unsubstituted N-terminal amino acids from various peptides.</text>
</comment>
<comment type="catalytic activity">
    <reaction evidence="1">
        <text>Release of an N-terminal amino acid, Xaa-|-Yaa-, in which Xaa is preferably Leu, but may be other amino acids including Pro although not Arg or Lys, and Yaa may be Pro. Amino acid amides and methyl esters are also readily hydrolyzed, but rates on arylamides are exceedingly low.</text>
        <dbReference type="EC" id="3.4.11.1"/>
    </reaction>
</comment>
<comment type="catalytic activity">
    <reaction evidence="1">
        <text>Release of an N-terminal amino acid, preferentially leucine, but not glutamic or aspartic acids.</text>
        <dbReference type="EC" id="3.4.11.10"/>
    </reaction>
</comment>
<comment type="cofactor">
    <cofactor evidence="1">
        <name>Mn(2+)</name>
        <dbReference type="ChEBI" id="CHEBI:29035"/>
    </cofactor>
    <text evidence="1">Binds 2 manganese ions per subunit.</text>
</comment>
<comment type="subcellular location">
    <subcellularLocation>
        <location evidence="1">Cytoplasm</location>
    </subcellularLocation>
</comment>
<comment type="similarity">
    <text evidence="1">Belongs to the peptidase M17 family.</text>
</comment>
<protein>
    <recommendedName>
        <fullName evidence="1">Probable cytosol aminopeptidase</fullName>
        <ecNumber evidence="1">3.4.11.1</ecNumber>
    </recommendedName>
    <alternativeName>
        <fullName evidence="1">Leucine aminopeptidase</fullName>
        <shortName evidence="1">LAP</shortName>
        <ecNumber evidence="1">3.4.11.10</ecNumber>
    </alternativeName>
    <alternativeName>
        <fullName evidence="1">Leucyl aminopeptidase</fullName>
    </alternativeName>
</protein>
<keyword id="KW-0031">Aminopeptidase</keyword>
<keyword id="KW-0963">Cytoplasm</keyword>
<keyword id="KW-0378">Hydrolase</keyword>
<keyword id="KW-0464">Manganese</keyword>
<keyword id="KW-0479">Metal-binding</keyword>
<keyword id="KW-0645">Protease</keyword>
<feature type="chain" id="PRO_1000058388" description="Probable cytosol aminopeptidase">
    <location>
        <begin position="1"/>
        <end position="503"/>
    </location>
</feature>
<feature type="active site" evidence="1">
    <location>
        <position position="282"/>
    </location>
</feature>
<feature type="active site" evidence="1">
    <location>
        <position position="356"/>
    </location>
</feature>
<feature type="binding site" evidence="1">
    <location>
        <position position="270"/>
    </location>
    <ligand>
        <name>Mn(2+)</name>
        <dbReference type="ChEBI" id="CHEBI:29035"/>
        <label>2</label>
    </ligand>
</feature>
<feature type="binding site" evidence="1">
    <location>
        <position position="275"/>
    </location>
    <ligand>
        <name>Mn(2+)</name>
        <dbReference type="ChEBI" id="CHEBI:29035"/>
        <label>1</label>
    </ligand>
</feature>
<feature type="binding site" evidence="1">
    <location>
        <position position="275"/>
    </location>
    <ligand>
        <name>Mn(2+)</name>
        <dbReference type="ChEBI" id="CHEBI:29035"/>
        <label>2</label>
    </ligand>
</feature>
<feature type="binding site" evidence="1">
    <location>
        <position position="293"/>
    </location>
    <ligand>
        <name>Mn(2+)</name>
        <dbReference type="ChEBI" id="CHEBI:29035"/>
        <label>2</label>
    </ligand>
</feature>
<feature type="binding site" evidence="1">
    <location>
        <position position="352"/>
    </location>
    <ligand>
        <name>Mn(2+)</name>
        <dbReference type="ChEBI" id="CHEBI:29035"/>
        <label>1</label>
    </ligand>
</feature>
<feature type="binding site" evidence="1">
    <location>
        <position position="354"/>
    </location>
    <ligand>
        <name>Mn(2+)</name>
        <dbReference type="ChEBI" id="CHEBI:29035"/>
        <label>1</label>
    </ligand>
</feature>
<feature type="binding site" evidence="1">
    <location>
        <position position="354"/>
    </location>
    <ligand>
        <name>Mn(2+)</name>
        <dbReference type="ChEBI" id="CHEBI:29035"/>
        <label>2</label>
    </ligand>
</feature>
<proteinExistence type="inferred from homology"/>
<sequence length="503" mass="54808">MEFSVKSGSPEKQRSACIVVGVFEPRRLSPIAEQLDKISDGYISALLRRGELEGKPGQTLLLHHVPNVLSERILLIGCGKERELDERQYKQVIQKTINTLNDTGSMEAVCFLTELHVKGRNTYWKVRQAVETAKESLYSFDQLKTTKSEPRRPLRKMVFNVPTRRELTSGERAIQHGLAIAAGIKAAKDLGNMPPNICNAGYLASQARQLADSYSKNIVTRVIGEQQMKELGMHSYLAVGNGSQNESLMSVIEYKGNPSEDARPIVLVGKGLTFDSGGISIKPAEGMDEMKYDMCGAAAVYGVMRMVAELQLPINVIGVLAGCENMPGGRAYRPGDVLTTMSGQTVEVLNTDAEGRLVLCDVLTYVERFEPEAVIDVATLTGACVIALGHHITGLMSNHNPLAHELIGASEQAGDRAWRLPLGDEYQEQLESNFADMANIGGRPGGAITAGCFLARFTRKYNWAHLDIAGTAWRSGKAKGATGRPVALLSQFLLNRAGFNGEE</sequence>